<gene>
    <name evidence="1" type="primary">xerD</name>
</gene>
<dbReference type="EMBL" id="AF173869">
    <property type="protein sequence ID" value="AAF89876.1"/>
    <property type="molecule type" value="Genomic_DNA"/>
</dbReference>
<dbReference type="EMBL" id="AF093548">
    <property type="protein sequence ID" value="AAC64162.1"/>
    <property type="molecule type" value="Genomic_DNA"/>
</dbReference>
<dbReference type="EMBL" id="AF118839">
    <property type="protein sequence ID" value="AAF21314.1"/>
    <property type="molecule type" value="Genomic_DNA"/>
</dbReference>
<dbReference type="RefSeq" id="WP_000447733.1">
    <property type="nucleotide sequence ID" value="NZ_WYDB01000002.1"/>
</dbReference>
<dbReference type="SMR" id="P0A0P2"/>
<dbReference type="OMA" id="FWYLIKR"/>
<dbReference type="GO" id="GO:0005737">
    <property type="term" value="C:cytoplasm"/>
    <property type="evidence" value="ECO:0007669"/>
    <property type="project" value="UniProtKB-SubCell"/>
</dbReference>
<dbReference type="GO" id="GO:0003677">
    <property type="term" value="F:DNA binding"/>
    <property type="evidence" value="ECO:0007669"/>
    <property type="project" value="UniProtKB-KW"/>
</dbReference>
<dbReference type="GO" id="GO:0009037">
    <property type="term" value="F:tyrosine-based site-specific recombinase activity"/>
    <property type="evidence" value="ECO:0007669"/>
    <property type="project" value="UniProtKB-UniRule"/>
</dbReference>
<dbReference type="GO" id="GO:0051301">
    <property type="term" value="P:cell division"/>
    <property type="evidence" value="ECO:0007669"/>
    <property type="project" value="UniProtKB-KW"/>
</dbReference>
<dbReference type="GO" id="GO:0007059">
    <property type="term" value="P:chromosome segregation"/>
    <property type="evidence" value="ECO:0007669"/>
    <property type="project" value="UniProtKB-UniRule"/>
</dbReference>
<dbReference type="GO" id="GO:0006313">
    <property type="term" value="P:DNA transposition"/>
    <property type="evidence" value="ECO:0007669"/>
    <property type="project" value="UniProtKB-UniRule"/>
</dbReference>
<dbReference type="CDD" id="cd00798">
    <property type="entry name" value="INT_XerDC_C"/>
    <property type="match status" value="1"/>
</dbReference>
<dbReference type="Gene3D" id="1.10.150.130">
    <property type="match status" value="1"/>
</dbReference>
<dbReference type="Gene3D" id="1.10.443.10">
    <property type="entry name" value="Intergrase catalytic core"/>
    <property type="match status" value="1"/>
</dbReference>
<dbReference type="HAMAP" id="MF_01808">
    <property type="entry name" value="Recomb_XerC_XerD"/>
    <property type="match status" value="1"/>
</dbReference>
<dbReference type="HAMAP" id="MF_01807">
    <property type="entry name" value="Recomb_XerD"/>
    <property type="match status" value="1"/>
</dbReference>
<dbReference type="InterPro" id="IPR044068">
    <property type="entry name" value="CB"/>
</dbReference>
<dbReference type="InterPro" id="IPR011010">
    <property type="entry name" value="DNA_brk_join_enz"/>
</dbReference>
<dbReference type="InterPro" id="IPR013762">
    <property type="entry name" value="Integrase-like_cat_sf"/>
</dbReference>
<dbReference type="InterPro" id="IPR002104">
    <property type="entry name" value="Integrase_catalytic"/>
</dbReference>
<dbReference type="InterPro" id="IPR010998">
    <property type="entry name" value="Integrase_recombinase_N"/>
</dbReference>
<dbReference type="InterPro" id="IPR004107">
    <property type="entry name" value="Integrase_SAM-like_N"/>
</dbReference>
<dbReference type="InterPro" id="IPR011932">
    <property type="entry name" value="Recomb_XerD"/>
</dbReference>
<dbReference type="InterPro" id="IPR023009">
    <property type="entry name" value="Tyrosine_recombinase_XerC/XerD"/>
</dbReference>
<dbReference type="InterPro" id="IPR050090">
    <property type="entry name" value="Tyrosine_recombinase_XerCD"/>
</dbReference>
<dbReference type="NCBIfam" id="NF001399">
    <property type="entry name" value="PRK00283.1"/>
    <property type="match status" value="1"/>
</dbReference>
<dbReference type="NCBIfam" id="NF040815">
    <property type="entry name" value="recomb_XerA_Arch"/>
    <property type="match status" value="1"/>
</dbReference>
<dbReference type="NCBIfam" id="TIGR02225">
    <property type="entry name" value="recomb_XerD"/>
    <property type="match status" value="1"/>
</dbReference>
<dbReference type="PANTHER" id="PTHR30349">
    <property type="entry name" value="PHAGE INTEGRASE-RELATED"/>
    <property type="match status" value="1"/>
</dbReference>
<dbReference type="PANTHER" id="PTHR30349:SF81">
    <property type="entry name" value="TYROSINE RECOMBINASE XERC"/>
    <property type="match status" value="1"/>
</dbReference>
<dbReference type="Pfam" id="PF02899">
    <property type="entry name" value="Phage_int_SAM_1"/>
    <property type="match status" value="1"/>
</dbReference>
<dbReference type="Pfam" id="PF00589">
    <property type="entry name" value="Phage_integrase"/>
    <property type="match status" value="1"/>
</dbReference>
<dbReference type="SUPFAM" id="SSF56349">
    <property type="entry name" value="DNA breaking-rejoining enzymes"/>
    <property type="match status" value="1"/>
</dbReference>
<dbReference type="PROSITE" id="PS51900">
    <property type="entry name" value="CB"/>
    <property type="match status" value="1"/>
</dbReference>
<dbReference type="PROSITE" id="PS51898">
    <property type="entry name" value="TYR_RECOMBINASE"/>
    <property type="match status" value="1"/>
</dbReference>
<organism>
    <name type="scientific">Staphylococcus aureus</name>
    <dbReference type="NCBI Taxonomy" id="1280"/>
    <lineage>
        <taxon>Bacteria</taxon>
        <taxon>Bacillati</taxon>
        <taxon>Bacillota</taxon>
        <taxon>Bacilli</taxon>
        <taxon>Bacillales</taxon>
        <taxon>Staphylococcaceae</taxon>
        <taxon>Staphylococcus</taxon>
    </lineage>
</organism>
<evidence type="ECO:0000255" key="1">
    <source>
        <dbReference type="HAMAP-Rule" id="MF_01807"/>
    </source>
</evidence>
<evidence type="ECO:0000255" key="2">
    <source>
        <dbReference type="PROSITE-ProRule" id="PRU01246"/>
    </source>
</evidence>
<evidence type="ECO:0000255" key="3">
    <source>
        <dbReference type="PROSITE-ProRule" id="PRU01248"/>
    </source>
</evidence>
<evidence type="ECO:0000305" key="4"/>
<protein>
    <recommendedName>
        <fullName evidence="1">Tyrosine recombinase XerD</fullName>
    </recommendedName>
</protein>
<sequence>METIIEEYLRFIQIEKGLSSNTIGAYRRDLKKYQDYMTEHHISHIDFIDRQLIQECLGHLIDQGQSAKSIARFISTIRSFHQFAIREKYAAKDPTVLLDSPKYDKKLPDVLNVDEVLALLETPDLNKINGYRDRTMLELLYATGMRVSELIHLELENVNLIMGFVRVFGKGDKERIVPLGDAVIEYLTTYIETIRPQLLKKTVTEVLFLNMHGKPLSRQAIWKMIKQNGVKANIKKTLTPHTLRHSFATHLLENGADLRAVQEMLGHSDISTTQLYTHVSKSQIRKMYNQFHPRA</sequence>
<reference key="1">
    <citation type="journal article" date="2000" name="J. Mol. Microbiol. Biotechnol.">
        <title>Genetic characterization of Gram-positive homologs of the XerCD site-specific recombinases.</title>
        <authorList>
            <person name="Chalker A.F."/>
            <person name="Lupas A."/>
            <person name="Ingraham K."/>
            <person name="So C.Y."/>
            <person name="Lunsford R.D."/>
            <person name="Li T."/>
            <person name="Bryant A."/>
            <person name="Holmes D.J."/>
            <person name="Marra A."/>
            <person name="Pearson S.C."/>
            <person name="Ray J."/>
            <person name="Burnham M.K.R."/>
            <person name="Palmer L.M."/>
            <person name="Biswas S."/>
            <person name="Zalacain M."/>
        </authorList>
    </citation>
    <scope>NUCLEOTIDE SEQUENCE [GENOMIC DNA]</scope>
    <source>
        <strain>WCUH29 / NCIMB 40771</strain>
    </source>
</reference>
<reference key="2">
    <citation type="submission" date="1998-09" db="EMBL/GenBank/DDBJ databases">
        <title>Cloning and characterization of the Staphylococcus aureus xerD gene.</title>
        <authorList>
            <person name="Tichat N."/>
            <person name="Szatmari G.B."/>
        </authorList>
    </citation>
    <scope>NUCLEOTIDE SEQUENCE [GENOMIC DNA]</scope>
</reference>
<reference key="3">
    <citation type="journal article" date="2000" name="Microbiology">
        <title>Molecular characterization of the ferric-uptake regulator, Fur, from Staphylococcus aureus.</title>
        <authorList>
            <person name="Xiong A."/>
            <person name="Singh V.K."/>
            <person name="Cabrera G."/>
            <person name="Jayaswal R.K."/>
        </authorList>
    </citation>
    <scope>NUCLEOTIDE SEQUENCE [GENOMIC DNA] OF 1-293</scope>
    <source>
        <strain>RN450 8325-4</strain>
    </source>
</reference>
<keyword id="KW-0131">Cell cycle</keyword>
<keyword id="KW-0132">Cell division</keyword>
<keyword id="KW-0159">Chromosome partition</keyword>
<keyword id="KW-0963">Cytoplasm</keyword>
<keyword id="KW-0229">DNA integration</keyword>
<keyword id="KW-0233">DNA recombination</keyword>
<keyword id="KW-0238">DNA-binding</keyword>
<accession>P0A0P2</accession>
<accession>O87666</accession>
<accession>Q9KJF7</accession>
<accession>Q9RGN6</accession>
<name>XERD_STAAU</name>
<feature type="chain" id="PRO_0000095422" description="Tyrosine recombinase XerD">
    <location>
        <begin position="1"/>
        <end position="295"/>
    </location>
</feature>
<feature type="domain" description="Core-binding (CB)" evidence="3">
    <location>
        <begin position="1"/>
        <end position="85"/>
    </location>
</feature>
<feature type="domain" description="Tyr recombinase" evidence="2">
    <location>
        <begin position="106"/>
        <end position="289"/>
    </location>
</feature>
<feature type="active site" evidence="1">
    <location>
        <position position="146"/>
    </location>
</feature>
<feature type="active site" evidence="1">
    <location>
        <position position="170"/>
    </location>
</feature>
<feature type="active site" evidence="1">
    <location>
        <position position="241"/>
    </location>
</feature>
<feature type="active site" evidence="1">
    <location>
        <position position="244"/>
    </location>
</feature>
<feature type="active site" evidence="1">
    <location>
        <position position="267"/>
    </location>
</feature>
<feature type="active site" description="O-(3'-phospho-DNA)-tyrosine intermediate" evidence="1">
    <location>
        <position position="276"/>
    </location>
</feature>
<feature type="sequence conflict" description="In Ref. 1; AAF89876." evidence="4" ref="1">
    <original>T</original>
    <variation>K</variation>
    <location>
        <position position="237"/>
    </location>
</feature>
<feature type="sequence conflict" description="In Ref. 1; AAF89876." evidence="4" ref="1">
    <original>R</original>
    <variation>K</variation>
    <location>
        <position position="285"/>
    </location>
</feature>
<feature type="sequence conflict" description="In Ref. 1; AAF89876." evidence="4" ref="1">
    <original>NQ</original>
    <variation>YP</variation>
    <location>
        <begin position="289"/>
        <end position="290"/>
    </location>
</feature>
<feature type="sequence conflict" description="In Ref. 3; AAF21314." evidence="4" ref="3">
    <original>P</original>
    <variation>A</variation>
    <location>
        <position position="293"/>
    </location>
</feature>
<feature type="sequence conflict" description="In Ref. 1; AAF89876." evidence="4" ref="1">
    <original>RA</original>
    <variation>KT</variation>
    <location>
        <begin position="294"/>
        <end position="295"/>
    </location>
</feature>
<comment type="function">
    <text evidence="1">Site-specific tyrosine recombinase, which acts by catalyzing the cutting and rejoining of the recombining DNA molecules. The XerC-XerD complex is essential to convert dimers of the bacterial chromosome into monomers to permit their segregation at cell division. It also contributes to the segregational stability of plasmids.</text>
</comment>
<comment type="subunit">
    <text evidence="1">Forms a cyclic heterotetrameric complex composed of two molecules of XerC and two molecules of XerD.</text>
</comment>
<comment type="subcellular location">
    <subcellularLocation>
        <location evidence="1">Cytoplasm</location>
    </subcellularLocation>
</comment>
<comment type="similarity">
    <text evidence="1">Belongs to the 'phage' integrase family. XerD subfamily.</text>
</comment>
<proteinExistence type="inferred from homology"/>